<feature type="chain" id="PRO_1000125519" description="Lysine--tRNA ligase">
    <location>
        <begin position="1"/>
        <end position="505"/>
    </location>
</feature>
<feature type="binding site" evidence="1">
    <location>
        <position position="415"/>
    </location>
    <ligand>
        <name>Mg(2+)</name>
        <dbReference type="ChEBI" id="CHEBI:18420"/>
        <label>1</label>
    </ligand>
</feature>
<feature type="binding site" evidence="1">
    <location>
        <position position="422"/>
    </location>
    <ligand>
        <name>Mg(2+)</name>
        <dbReference type="ChEBI" id="CHEBI:18420"/>
        <label>1</label>
    </ligand>
</feature>
<feature type="binding site" evidence="1">
    <location>
        <position position="422"/>
    </location>
    <ligand>
        <name>Mg(2+)</name>
        <dbReference type="ChEBI" id="CHEBI:18420"/>
        <label>2</label>
    </ligand>
</feature>
<dbReference type="EC" id="6.1.1.6" evidence="1"/>
<dbReference type="EMBL" id="AM408590">
    <property type="protein sequence ID" value="CAL73652.1"/>
    <property type="molecule type" value="Genomic_DNA"/>
</dbReference>
<dbReference type="RefSeq" id="WP_003419514.1">
    <property type="nucleotide sequence ID" value="NC_008769.1"/>
</dbReference>
<dbReference type="SMR" id="A1KPT4"/>
<dbReference type="KEGG" id="mbb:BCG_3663c"/>
<dbReference type="HOGENOM" id="CLU_008255_6_0_11"/>
<dbReference type="Proteomes" id="UP000001472">
    <property type="component" value="Chromosome"/>
</dbReference>
<dbReference type="GO" id="GO:0005829">
    <property type="term" value="C:cytosol"/>
    <property type="evidence" value="ECO:0007669"/>
    <property type="project" value="TreeGrafter"/>
</dbReference>
<dbReference type="GO" id="GO:0005524">
    <property type="term" value="F:ATP binding"/>
    <property type="evidence" value="ECO:0007669"/>
    <property type="project" value="UniProtKB-UniRule"/>
</dbReference>
<dbReference type="GO" id="GO:0004824">
    <property type="term" value="F:lysine-tRNA ligase activity"/>
    <property type="evidence" value="ECO:0007669"/>
    <property type="project" value="UniProtKB-UniRule"/>
</dbReference>
<dbReference type="GO" id="GO:0000287">
    <property type="term" value="F:magnesium ion binding"/>
    <property type="evidence" value="ECO:0007669"/>
    <property type="project" value="UniProtKB-UniRule"/>
</dbReference>
<dbReference type="GO" id="GO:0000049">
    <property type="term" value="F:tRNA binding"/>
    <property type="evidence" value="ECO:0007669"/>
    <property type="project" value="TreeGrafter"/>
</dbReference>
<dbReference type="GO" id="GO:0006430">
    <property type="term" value="P:lysyl-tRNA aminoacylation"/>
    <property type="evidence" value="ECO:0007669"/>
    <property type="project" value="UniProtKB-UniRule"/>
</dbReference>
<dbReference type="CDD" id="cd04322">
    <property type="entry name" value="LysRS_N"/>
    <property type="match status" value="1"/>
</dbReference>
<dbReference type="FunFam" id="2.40.50.140:FF:000024">
    <property type="entry name" value="Lysine--tRNA ligase"/>
    <property type="match status" value="1"/>
</dbReference>
<dbReference type="FunFam" id="3.30.930.10:FF:000079">
    <property type="entry name" value="Lysine--tRNA ligase 1"/>
    <property type="match status" value="1"/>
</dbReference>
<dbReference type="Gene3D" id="3.30.930.10">
    <property type="entry name" value="Bira Bifunctional Protein, Domain 2"/>
    <property type="match status" value="1"/>
</dbReference>
<dbReference type="Gene3D" id="2.40.50.140">
    <property type="entry name" value="Nucleic acid-binding proteins"/>
    <property type="match status" value="1"/>
</dbReference>
<dbReference type="HAMAP" id="MF_00252">
    <property type="entry name" value="Lys_tRNA_synth_class2"/>
    <property type="match status" value="1"/>
</dbReference>
<dbReference type="InterPro" id="IPR004364">
    <property type="entry name" value="Aa-tRNA-synt_II"/>
</dbReference>
<dbReference type="InterPro" id="IPR006195">
    <property type="entry name" value="aa-tRNA-synth_II"/>
</dbReference>
<dbReference type="InterPro" id="IPR045864">
    <property type="entry name" value="aa-tRNA-synth_II/BPL/LPL"/>
</dbReference>
<dbReference type="InterPro" id="IPR002313">
    <property type="entry name" value="Lys-tRNA-ligase_II"/>
</dbReference>
<dbReference type="InterPro" id="IPR044136">
    <property type="entry name" value="Lys-tRNA-ligase_II_N"/>
</dbReference>
<dbReference type="InterPro" id="IPR018149">
    <property type="entry name" value="Lys-tRNA-synth_II_C"/>
</dbReference>
<dbReference type="InterPro" id="IPR012340">
    <property type="entry name" value="NA-bd_OB-fold"/>
</dbReference>
<dbReference type="InterPro" id="IPR004365">
    <property type="entry name" value="NA-bd_OB_tRNA"/>
</dbReference>
<dbReference type="NCBIfam" id="TIGR00499">
    <property type="entry name" value="lysS_bact"/>
    <property type="match status" value="1"/>
</dbReference>
<dbReference type="NCBIfam" id="NF001756">
    <property type="entry name" value="PRK00484.1"/>
    <property type="match status" value="1"/>
</dbReference>
<dbReference type="PANTHER" id="PTHR42918:SF15">
    <property type="entry name" value="LYSINE--TRNA LIGASE, CHLOROPLASTIC_MITOCHONDRIAL"/>
    <property type="match status" value="1"/>
</dbReference>
<dbReference type="PANTHER" id="PTHR42918">
    <property type="entry name" value="LYSYL-TRNA SYNTHETASE"/>
    <property type="match status" value="1"/>
</dbReference>
<dbReference type="Pfam" id="PF00152">
    <property type="entry name" value="tRNA-synt_2"/>
    <property type="match status" value="1"/>
</dbReference>
<dbReference type="Pfam" id="PF01336">
    <property type="entry name" value="tRNA_anti-codon"/>
    <property type="match status" value="1"/>
</dbReference>
<dbReference type="PRINTS" id="PR00982">
    <property type="entry name" value="TRNASYNTHLYS"/>
</dbReference>
<dbReference type="SUPFAM" id="SSF55681">
    <property type="entry name" value="Class II aaRS and biotin synthetases"/>
    <property type="match status" value="1"/>
</dbReference>
<dbReference type="SUPFAM" id="SSF50249">
    <property type="entry name" value="Nucleic acid-binding proteins"/>
    <property type="match status" value="1"/>
</dbReference>
<dbReference type="PROSITE" id="PS50862">
    <property type="entry name" value="AA_TRNA_LIGASE_II"/>
    <property type="match status" value="1"/>
</dbReference>
<evidence type="ECO:0000255" key="1">
    <source>
        <dbReference type="HAMAP-Rule" id="MF_00252"/>
    </source>
</evidence>
<accession>A1KPT4</accession>
<keyword id="KW-0030">Aminoacyl-tRNA synthetase</keyword>
<keyword id="KW-0067">ATP-binding</keyword>
<keyword id="KW-0963">Cytoplasm</keyword>
<keyword id="KW-0436">Ligase</keyword>
<keyword id="KW-0460">Magnesium</keyword>
<keyword id="KW-0479">Metal-binding</keyword>
<keyword id="KW-0547">Nucleotide-binding</keyword>
<keyword id="KW-0648">Protein biosynthesis</keyword>
<protein>
    <recommendedName>
        <fullName evidence="1">Lysine--tRNA ligase</fullName>
        <ecNumber evidence="1">6.1.1.6</ecNumber>
    </recommendedName>
    <alternativeName>
        <fullName evidence="1">Lysyl-tRNA synthetase</fullName>
        <shortName evidence="1">LysRS</shortName>
    </alternativeName>
</protein>
<comment type="catalytic activity">
    <reaction evidence="1">
        <text>tRNA(Lys) + L-lysine + ATP = L-lysyl-tRNA(Lys) + AMP + diphosphate</text>
        <dbReference type="Rhea" id="RHEA:20792"/>
        <dbReference type="Rhea" id="RHEA-COMP:9696"/>
        <dbReference type="Rhea" id="RHEA-COMP:9697"/>
        <dbReference type="ChEBI" id="CHEBI:30616"/>
        <dbReference type="ChEBI" id="CHEBI:32551"/>
        <dbReference type="ChEBI" id="CHEBI:33019"/>
        <dbReference type="ChEBI" id="CHEBI:78442"/>
        <dbReference type="ChEBI" id="CHEBI:78529"/>
        <dbReference type="ChEBI" id="CHEBI:456215"/>
        <dbReference type="EC" id="6.1.1.6"/>
    </reaction>
</comment>
<comment type="cofactor">
    <cofactor evidence="1">
        <name>Mg(2+)</name>
        <dbReference type="ChEBI" id="CHEBI:18420"/>
    </cofactor>
    <text evidence="1">Binds 3 Mg(2+) ions per subunit.</text>
</comment>
<comment type="subunit">
    <text evidence="1">Homodimer.</text>
</comment>
<comment type="subcellular location">
    <subcellularLocation>
        <location evidence="1">Cytoplasm</location>
    </subcellularLocation>
</comment>
<comment type="similarity">
    <text evidence="1">Belongs to the class-II aminoacyl-tRNA synthetase family.</text>
</comment>
<name>SYK_MYCBP</name>
<organism>
    <name type="scientific">Mycobacterium bovis (strain BCG / Pasteur 1173P2)</name>
    <dbReference type="NCBI Taxonomy" id="410289"/>
    <lineage>
        <taxon>Bacteria</taxon>
        <taxon>Bacillati</taxon>
        <taxon>Actinomycetota</taxon>
        <taxon>Actinomycetes</taxon>
        <taxon>Mycobacteriales</taxon>
        <taxon>Mycobacteriaceae</taxon>
        <taxon>Mycobacterium</taxon>
        <taxon>Mycobacterium tuberculosis complex</taxon>
    </lineage>
</organism>
<sequence>MSAADTAEDLPEQFRIRRDKRARLLAQGRDPYPVAVPRTHTLAEVRAAHPDLPIDTATEDIVGVAGRVIFARNSGKLCFATLQDGDGTQLQVMISLDKVGQAALDAWKADVDLGDIVYVHGAVISSRRGELSVLADCWRIAAKSLRPLPVAHKEMSEESRVRQRYVDLIVRPEARAVARLRIAVVRAIRTALQRRGFLEVETPVLQTLAGGAAARPFATHSNALDIDLYLRIAPELFLKRCIVGGFDKVFELNRVFRNEGADSTHSPEFSMLETYQTYGTYDDSAVVTRELIQEVADEAIGTRQLPLPDGSVYDIDGEWATIQMYPSLSVALGEEITPQTTVDRLRGIADSLGLEKDPAIHDNRGFGHGKLIEELWERTVGKSLSAPTFVKDFPVQTTPLTRQHRSIPGVTEKWDLYLRGIELATGYSELSDPVVQRERFADQARAAAAGDDEAMVLDEDFLAALEYGMPPCTGTGMGIDRLLMSLTGLSIRETVLFPIVRPHSN</sequence>
<proteinExistence type="inferred from homology"/>
<gene>
    <name evidence="1" type="primary">lysS</name>
    <name type="ordered locus">BCG_3663c</name>
</gene>
<reference key="1">
    <citation type="journal article" date="2007" name="Proc. Natl. Acad. Sci. U.S.A.">
        <title>Genome plasticity of BCG and impact on vaccine efficacy.</title>
        <authorList>
            <person name="Brosch R."/>
            <person name="Gordon S.V."/>
            <person name="Garnier T."/>
            <person name="Eiglmeier K."/>
            <person name="Frigui W."/>
            <person name="Valenti P."/>
            <person name="Dos Santos S."/>
            <person name="Duthoy S."/>
            <person name="Lacroix C."/>
            <person name="Garcia-Pelayo C."/>
            <person name="Inwald J.K."/>
            <person name="Golby P."/>
            <person name="Garcia J.N."/>
            <person name="Hewinson R.G."/>
            <person name="Behr M.A."/>
            <person name="Quail M.A."/>
            <person name="Churcher C."/>
            <person name="Barrell B.G."/>
            <person name="Parkhill J."/>
            <person name="Cole S.T."/>
        </authorList>
    </citation>
    <scope>NUCLEOTIDE SEQUENCE [LARGE SCALE GENOMIC DNA]</scope>
    <source>
        <strain>BCG / Pasteur 1173P2</strain>
    </source>
</reference>